<feature type="chain" id="PRO_1000090199" description="SsrA-binding protein">
    <location>
        <begin position="1"/>
        <end position="149"/>
    </location>
</feature>
<accession>B3CPW2</accession>
<keyword id="KW-0963">Cytoplasm</keyword>
<keyword id="KW-0694">RNA-binding</keyword>
<name>SSRP_WOLPP</name>
<protein>
    <recommendedName>
        <fullName evidence="1">SsrA-binding protein</fullName>
    </recommendedName>
    <alternativeName>
        <fullName evidence="1">Small protein B</fullName>
    </alternativeName>
</protein>
<reference key="1">
    <citation type="journal article" date="2008" name="Mol. Biol. Evol.">
        <title>Genome evolution of Wolbachia strain wPip from the Culex pipiens group.</title>
        <authorList>
            <person name="Klasson L."/>
            <person name="Walker T."/>
            <person name="Sebaihia M."/>
            <person name="Sanders M.J."/>
            <person name="Quail M.A."/>
            <person name="Lord A."/>
            <person name="Sanders S."/>
            <person name="Earl J."/>
            <person name="O'Neill S.L."/>
            <person name="Thomson N."/>
            <person name="Sinkins S.P."/>
            <person name="Parkhill J."/>
        </authorList>
    </citation>
    <scope>NUCLEOTIDE SEQUENCE [LARGE SCALE GENOMIC DNA]</scope>
    <source>
        <strain>wPip</strain>
    </source>
</reference>
<gene>
    <name evidence="1" type="primary">smpB</name>
    <name type="ordered locus">WP0507</name>
</gene>
<sequence>MEVIAENRKARFEYFILEEFEAGMILLSSEVKSLRERKANISDAYVTEKKGEIWLNNMHIAEYKAANQKNHKPKRERKLLLHKKEINKLIGQIKTSGITVVPLSIYFNDKGLAKTKIAIVKGKKLYDKRATIKQREWEREKSRLSKNNL</sequence>
<proteinExistence type="inferred from homology"/>
<comment type="function">
    <text evidence="1">Required for rescue of stalled ribosomes mediated by trans-translation. Binds to transfer-messenger RNA (tmRNA), required for stable association of tmRNA with ribosomes. tmRNA and SmpB together mimic tRNA shape, replacing the anticodon stem-loop with SmpB. tmRNA is encoded by the ssrA gene; the 2 termini fold to resemble tRNA(Ala) and it encodes a 'tag peptide', a short internal open reading frame. During trans-translation Ala-aminoacylated tmRNA acts like a tRNA, entering the A-site of stalled ribosomes, displacing the stalled mRNA. The ribosome then switches to translate the ORF on the tmRNA; the nascent peptide is terminated with the 'tag peptide' encoded by the tmRNA and targeted for degradation. The ribosome is freed to recommence translation, which seems to be the essential function of trans-translation.</text>
</comment>
<comment type="subcellular location">
    <subcellularLocation>
        <location evidence="1">Cytoplasm</location>
    </subcellularLocation>
    <text evidence="1">The tmRNA-SmpB complex associates with stalled 70S ribosomes.</text>
</comment>
<comment type="similarity">
    <text evidence="1">Belongs to the SmpB family.</text>
</comment>
<dbReference type="EMBL" id="AM999887">
    <property type="protein sequence ID" value="CAQ54615.1"/>
    <property type="molecule type" value="Genomic_DNA"/>
</dbReference>
<dbReference type="RefSeq" id="WP_007301946.1">
    <property type="nucleotide sequence ID" value="NC_010981.1"/>
</dbReference>
<dbReference type="SMR" id="B3CPW2"/>
<dbReference type="KEGG" id="wpi:WP0507"/>
<dbReference type="eggNOG" id="COG0691">
    <property type="taxonomic scope" value="Bacteria"/>
</dbReference>
<dbReference type="HOGENOM" id="CLU_108953_0_1_5"/>
<dbReference type="Proteomes" id="UP000008814">
    <property type="component" value="Chromosome"/>
</dbReference>
<dbReference type="GO" id="GO:0005829">
    <property type="term" value="C:cytosol"/>
    <property type="evidence" value="ECO:0007669"/>
    <property type="project" value="TreeGrafter"/>
</dbReference>
<dbReference type="GO" id="GO:0003723">
    <property type="term" value="F:RNA binding"/>
    <property type="evidence" value="ECO:0007669"/>
    <property type="project" value="UniProtKB-UniRule"/>
</dbReference>
<dbReference type="GO" id="GO:0070929">
    <property type="term" value="P:trans-translation"/>
    <property type="evidence" value="ECO:0007669"/>
    <property type="project" value="UniProtKB-UniRule"/>
</dbReference>
<dbReference type="CDD" id="cd09294">
    <property type="entry name" value="SmpB"/>
    <property type="match status" value="1"/>
</dbReference>
<dbReference type="Gene3D" id="2.40.280.10">
    <property type="match status" value="1"/>
</dbReference>
<dbReference type="HAMAP" id="MF_00023">
    <property type="entry name" value="SmpB"/>
    <property type="match status" value="1"/>
</dbReference>
<dbReference type="InterPro" id="IPR023620">
    <property type="entry name" value="SmpB"/>
</dbReference>
<dbReference type="InterPro" id="IPR000037">
    <property type="entry name" value="SsrA-bd_prot"/>
</dbReference>
<dbReference type="NCBIfam" id="NF003843">
    <property type="entry name" value="PRK05422.1"/>
    <property type="match status" value="1"/>
</dbReference>
<dbReference type="NCBIfam" id="TIGR00086">
    <property type="entry name" value="smpB"/>
    <property type="match status" value="1"/>
</dbReference>
<dbReference type="PANTHER" id="PTHR30308:SF2">
    <property type="entry name" value="SSRA-BINDING PROTEIN"/>
    <property type="match status" value="1"/>
</dbReference>
<dbReference type="PANTHER" id="PTHR30308">
    <property type="entry name" value="TMRNA-BINDING COMPONENT OF TRANS-TRANSLATION TAGGING COMPLEX"/>
    <property type="match status" value="1"/>
</dbReference>
<dbReference type="Pfam" id="PF01668">
    <property type="entry name" value="SmpB"/>
    <property type="match status" value="1"/>
</dbReference>
<dbReference type="SUPFAM" id="SSF74982">
    <property type="entry name" value="Small protein B (SmpB)"/>
    <property type="match status" value="1"/>
</dbReference>
<evidence type="ECO:0000255" key="1">
    <source>
        <dbReference type="HAMAP-Rule" id="MF_00023"/>
    </source>
</evidence>
<organism>
    <name type="scientific">Wolbachia pipientis subsp. Culex pipiens (strain wPip)</name>
    <dbReference type="NCBI Taxonomy" id="570417"/>
    <lineage>
        <taxon>Bacteria</taxon>
        <taxon>Pseudomonadati</taxon>
        <taxon>Pseudomonadota</taxon>
        <taxon>Alphaproteobacteria</taxon>
        <taxon>Rickettsiales</taxon>
        <taxon>Anaplasmataceae</taxon>
        <taxon>Wolbachieae</taxon>
        <taxon>Wolbachia</taxon>
    </lineage>
</organism>